<organism>
    <name type="scientific">Shewanella oneidensis (strain ATCC 700550 / JCM 31522 / CIP 106686 / LMG 19005 / NCIMB 14063 / MR-1)</name>
    <dbReference type="NCBI Taxonomy" id="211586"/>
    <lineage>
        <taxon>Bacteria</taxon>
        <taxon>Pseudomonadati</taxon>
        <taxon>Pseudomonadota</taxon>
        <taxon>Gammaproteobacteria</taxon>
        <taxon>Alteromonadales</taxon>
        <taxon>Shewanellaceae</taxon>
        <taxon>Shewanella</taxon>
    </lineage>
</organism>
<gene>
    <name evidence="1" type="primary">hemF</name>
    <name type="ordered locus">SO_0038</name>
</gene>
<evidence type="ECO:0000255" key="1">
    <source>
        <dbReference type="HAMAP-Rule" id="MF_00333"/>
    </source>
</evidence>
<sequence length="302" mass="34090">MSLPDATVVKAFLLDLQHRICAGLEQLDGQASFAADSWTRAEGGGGTSRVLTQGAVFEQAGVNFSHVTGAAMPASATAHRPELAGRSFEAMGVSLVIHPKNPYIPTTHANVRFFIAHKDGAEPVWWFGGGFDLTPYYPFEEDVREWHQSAKNLCQPFGDDVYPKYKKWCDEYFFLPHRNETRGVGGLFFDDLNQAGFDKSFDFMQAVGNGFLTAYAPIVERRKDTDYGERERDFQLYRRGRYVEFNLVYDRGTLFGLQTGGRTESILMSMPPLVRWQYAYTPAAGSPEADLYDNYLKPRDWV</sequence>
<protein>
    <recommendedName>
        <fullName evidence="1">Oxygen-dependent coproporphyrinogen-III oxidase</fullName>
        <shortName evidence="1">CPO</shortName>
        <shortName evidence="1">Coprogen oxidase</shortName>
        <shortName evidence="1">Coproporphyrinogenase</shortName>
        <ecNumber evidence="1">1.3.3.3</ecNumber>
    </recommendedName>
</protein>
<proteinExistence type="inferred from homology"/>
<comment type="function">
    <text evidence="1">Involved in the heme biosynthesis. Catalyzes the aerobic oxidative decarboxylation of propionate groups of rings A and B of coproporphyrinogen-III to yield the vinyl groups in protoporphyrinogen-IX.</text>
</comment>
<comment type="catalytic activity">
    <reaction evidence="1">
        <text>coproporphyrinogen III + O2 + 2 H(+) = protoporphyrinogen IX + 2 CO2 + 2 H2O</text>
        <dbReference type="Rhea" id="RHEA:18257"/>
        <dbReference type="ChEBI" id="CHEBI:15377"/>
        <dbReference type="ChEBI" id="CHEBI:15378"/>
        <dbReference type="ChEBI" id="CHEBI:15379"/>
        <dbReference type="ChEBI" id="CHEBI:16526"/>
        <dbReference type="ChEBI" id="CHEBI:57307"/>
        <dbReference type="ChEBI" id="CHEBI:57309"/>
        <dbReference type="EC" id="1.3.3.3"/>
    </reaction>
</comment>
<comment type="cofactor">
    <cofactor evidence="1">
        <name>a divalent metal cation</name>
        <dbReference type="ChEBI" id="CHEBI:60240"/>
    </cofactor>
</comment>
<comment type="pathway">
    <text evidence="1">Porphyrin-containing compound metabolism; protoporphyrin-IX biosynthesis; protoporphyrinogen-IX from coproporphyrinogen-III (O2 route): step 1/1.</text>
</comment>
<comment type="subunit">
    <text evidence="1">Homodimer.</text>
</comment>
<comment type="subcellular location">
    <subcellularLocation>
        <location evidence="1">Cytoplasm</location>
    </subcellularLocation>
</comment>
<comment type="similarity">
    <text evidence="1">Belongs to the aerobic coproporphyrinogen-III oxidase family.</text>
</comment>
<accession>Q8EKQ2</accession>
<name>HEM6_SHEON</name>
<keyword id="KW-0963">Cytoplasm</keyword>
<keyword id="KW-0350">Heme biosynthesis</keyword>
<keyword id="KW-0479">Metal-binding</keyword>
<keyword id="KW-0560">Oxidoreductase</keyword>
<keyword id="KW-0627">Porphyrin biosynthesis</keyword>
<keyword id="KW-1185">Reference proteome</keyword>
<dbReference type="EC" id="1.3.3.3" evidence="1"/>
<dbReference type="EMBL" id="AE014299">
    <property type="protein sequence ID" value="AAN53125.1"/>
    <property type="molecule type" value="Genomic_DNA"/>
</dbReference>
<dbReference type="RefSeq" id="NP_715680.1">
    <property type="nucleotide sequence ID" value="NC_004347.2"/>
</dbReference>
<dbReference type="RefSeq" id="WP_011070454.1">
    <property type="nucleotide sequence ID" value="NC_004347.2"/>
</dbReference>
<dbReference type="SMR" id="Q8EKQ2"/>
<dbReference type="STRING" id="211586.SO_0038"/>
<dbReference type="PaxDb" id="211586-SO_0038"/>
<dbReference type="KEGG" id="son:SO_0038"/>
<dbReference type="PATRIC" id="fig|211586.12.peg.38"/>
<dbReference type="eggNOG" id="COG0408">
    <property type="taxonomic scope" value="Bacteria"/>
</dbReference>
<dbReference type="HOGENOM" id="CLU_026169_0_1_6"/>
<dbReference type="OrthoDB" id="9777553at2"/>
<dbReference type="PhylomeDB" id="Q8EKQ2"/>
<dbReference type="BioCyc" id="SONE211586:G1GMP-38-MONOMER"/>
<dbReference type="UniPathway" id="UPA00251">
    <property type="reaction ID" value="UER00322"/>
</dbReference>
<dbReference type="Proteomes" id="UP000008186">
    <property type="component" value="Chromosome"/>
</dbReference>
<dbReference type="GO" id="GO:0005737">
    <property type="term" value="C:cytoplasm"/>
    <property type="evidence" value="ECO:0000318"/>
    <property type="project" value="GO_Central"/>
</dbReference>
<dbReference type="GO" id="GO:0004109">
    <property type="term" value="F:coproporphyrinogen oxidase activity"/>
    <property type="evidence" value="ECO:0000318"/>
    <property type="project" value="GO_Central"/>
</dbReference>
<dbReference type="GO" id="GO:0046872">
    <property type="term" value="F:metal ion binding"/>
    <property type="evidence" value="ECO:0007669"/>
    <property type="project" value="UniProtKB-KW"/>
</dbReference>
<dbReference type="GO" id="GO:0042803">
    <property type="term" value="F:protein homodimerization activity"/>
    <property type="evidence" value="ECO:0000250"/>
    <property type="project" value="UniProtKB"/>
</dbReference>
<dbReference type="GO" id="GO:0006782">
    <property type="term" value="P:protoporphyrinogen IX biosynthetic process"/>
    <property type="evidence" value="ECO:0000318"/>
    <property type="project" value="GO_Central"/>
</dbReference>
<dbReference type="FunFam" id="3.40.1500.10:FF:000001">
    <property type="entry name" value="Oxygen-dependent coproporphyrinogen-III oxidase"/>
    <property type="match status" value="1"/>
</dbReference>
<dbReference type="Gene3D" id="3.40.1500.10">
    <property type="entry name" value="Coproporphyrinogen III oxidase, aerobic"/>
    <property type="match status" value="1"/>
</dbReference>
<dbReference type="HAMAP" id="MF_00333">
    <property type="entry name" value="Coprogen_oxidas"/>
    <property type="match status" value="1"/>
</dbReference>
<dbReference type="InterPro" id="IPR001260">
    <property type="entry name" value="Coprogen_oxidase_aer"/>
</dbReference>
<dbReference type="InterPro" id="IPR036406">
    <property type="entry name" value="Coprogen_oxidase_aer_sf"/>
</dbReference>
<dbReference type="InterPro" id="IPR018375">
    <property type="entry name" value="Coprogen_oxidase_CS"/>
</dbReference>
<dbReference type="NCBIfam" id="NF003727">
    <property type="entry name" value="PRK05330.1"/>
    <property type="match status" value="1"/>
</dbReference>
<dbReference type="PANTHER" id="PTHR10755">
    <property type="entry name" value="COPROPORPHYRINOGEN III OXIDASE, MITOCHONDRIAL"/>
    <property type="match status" value="1"/>
</dbReference>
<dbReference type="PANTHER" id="PTHR10755:SF0">
    <property type="entry name" value="OXYGEN-DEPENDENT COPROPORPHYRINOGEN-III OXIDASE, MITOCHONDRIAL"/>
    <property type="match status" value="1"/>
</dbReference>
<dbReference type="Pfam" id="PF01218">
    <property type="entry name" value="Coprogen_oxidas"/>
    <property type="match status" value="1"/>
</dbReference>
<dbReference type="PIRSF" id="PIRSF000166">
    <property type="entry name" value="Coproporphyri_ox"/>
    <property type="match status" value="1"/>
</dbReference>
<dbReference type="PRINTS" id="PR00073">
    <property type="entry name" value="COPRGNOXDASE"/>
</dbReference>
<dbReference type="SUPFAM" id="SSF102886">
    <property type="entry name" value="Coproporphyrinogen III oxidase"/>
    <property type="match status" value="1"/>
</dbReference>
<dbReference type="PROSITE" id="PS01021">
    <property type="entry name" value="COPROGEN_OXIDASE"/>
    <property type="match status" value="1"/>
</dbReference>
<reference key="1">
    <citation type="journal article" date="2002" name="Nat. Biotechnol.">
        <title>Genome sequence of the dissimilatory metal ion-reducing bacterium Shewanella oneidensis.</title>
        <authorList>
            <person name="Heidelberg J.F."/>
            <person name="Paulsen I.T."/>
            <person name="Nelson K.E."/>
            <person name="Gaidos E.J."/>
            <person name="Nelson W.C."/>
            <person name="Read T.D."/>
            <person name="Eisen J.A."/>
            <person name="Seshadri R."/>
            <person name="Ward N.L."/>
            <person name="Methe B.A."/>
            <person name="Clayton R.A."/>
            <person name="Meyer T."/>
            <person name="Tsapin A."/>
            <person name="Scott J."/>
            <person name="Beanan M.J."/>
            <person name="Brinkac L.M."/>
            <person name="Daugherty S.C."/>
            <person name="DeBoy R.T."/>
            <person name="Dodson R.J."/>
            <person name="Durkin A.S."/>
            <person name="Haft D.H."/>
            <person name="Kolonay J.F."/>
            <person name="Madupu R."/>
            <person name="Peterson J.D."/>
            <person name="Umayam L.A."/>
            <person name="White O."/>
            <person name="Wolf A.M."/>
            <person name="Vamathevan J.J."/>
            <person name="Weidman J.F."/>
            <person name="Impraim M."/>
            <person name="Lee K."/>
            <person name="Berry K.J."/>
            <person name="Lee C."/>
            <person name="Mueller J."/>
            <person name="Khouri H.M."/>
            <person name="Gill J."/>
            <person name="Utterback T.R."/>
            <person name="McDonald L.A."/>
            <person name="Feldblyum T.V."/>
            <person name="Smith H.O."/>
            <person name="Venter J.C."/>
            <person name="Nealson K.H."/>
            <person name="Fraser C.M."/>
        </authorList>
    </citation>
    <scope>NUCLEOTIDE SEQUENCE [LARGE SCALE GENOMIC DNA]</scope>
    <source>
        <strain>ATCC 700550 / JCM 31522 / CIP 106686 / LMG 19005 / NCIMB 14063 / MR-1</strain>
    </source>
</reference>
<feature type="chain" id="PRO_0000109920" description="Oxygen-dependent coproporphyrinogen-III oxidase">
    <location>
        <begin position="1"/>
        <end position="302"/>
    </location>
</feature>
<feature type="region of interest" description="Important for dimerization" evidence="1">
    <location>
        <begin position="242"/>
        <end position="277"/>
    </location>
</feature>
<feature type="active site" description="Proton donor" evidence="1">
    <location>
        <position position="108"/>
    </location>
</feature>
<feature type="binding site" evidence="1">
    <location>
        <position position="94"/>
    </location>
    <ligand>
        <name>substrate</name>
    </ligand>
</feature>
<feature type="binding site" evidence="1">
    <location>
        <position position="98"/>
    </location>
    <ligand>
        <name>a divalent metal cation</name>
        <dbReference type="ChEBI" id="CHEBI:60240"/>
    </ligand>
</feature>
<feature type="binding site" evidence="1">
    <location>
        <position position="108"/>
    </location>
    <ligand>
        <name>a divalent metal cation</name>
        <dbReference type="ChEBI" id="CHEBI:60240"/>
    </ligand>
</feature>
<feature type="binding site" evidence="1">
    <location>
        <begin position="110"/>
        <end position="112"/>
    </location>
    <ligand>
        <name>substrate</name>
    </ligand>
</feature>
<feature type="binding site" evidence="1">
    <location>
        <position position="147"/>
    </location>
    <ligand>
        <name>a divalent metal cation</name>
        <dbReference type="ChEBI" id="CHEBI:60240"/>
    </ligand>
</feature>
<feature type="binding site" evidence="1">
    <location>
        <position position="177"/>
    </location>
    <ligand>
        <name>a divalent metal cation</name>
        <dbReference type="ChEBI" id="CHEBI:60240"/>
    </ligand>
</feature>
<feature type="binding site" evidence="1">
    <location>
        <begin position="260"/>
        <end position="262"/>
    </location>
    <ligand>
        <name>substrate</name>
    </ligand>
</feature>
<feature type="site" description="Important for dimerization" evidence="1">
    <location>
        <position position="177"/>
    </location>
</feature>